<feature type="chain" id="PRO_0000233105" description="Thiol-disulfide oxidoreductase YkuV">
    <location>
        <begin position="1"/>
        <end position="148"/>
    </location>
</feature>
<feature type="domain" description="Thioredoxin" evidence="2">
    <location>
        <begin position="2"/>
        <end position="145"/>
    </location>
</feature>
<feature type="disulfide bond" description="Redox-active" evidence="2 3">
    <location>
        <begin position="41"/>
        <end position="44"/>
    </location>
</feature>
<feature type="sequence conflict" description="In Ref. 1; CAA10885." evidence="4" ref="1">
    <original>LAETE</original>
    <variation>WLKRNRYLTK</variation>
    <location>
        <begin position="144"/>
        <end position="148"/>
    </location>
</feature>
<feature type="strand" evidence="5">
    <location>
        <begin position="16"/>
        <end position="18"/>
    </location>
</feature>
<feature type="helix" evidence="5">
    <location>
        <begin position="23"/>
        <end position="26"/>
    </location>
</feature>
<feature type="turn" evidence="5">
    <location>
        <begin position="27"/>
        <end position="29"/>
    </location>
</feature>
<feature type="strand" evidence="5">
    <location>
        <begin position="32"/>
        <end position="37"/>
    </location>
</feature>
<feature type="helix" evidence="5">
    <location>
        <begin position="42"/>
        <end position="58"/>
    </location>
</feature>
<feature type="turn" evidence="5">
    <location>
        <begin position="59"/>
        <end position="61"/>
    </location>
</feature>
<feature type="strand" evidence="5">
    <location>
        <begin position="62"/>
        <end position="68"/>
    </location>
</feature>
<feature type="turn" evidence="5">
    <location>
        <begin position="73"/>
        <end position="75"/>
    </location>
</feature>
<feature type="helix" evidence="5">
    <location>
        <begin position="78"/>
        <end position="87"/>
    </location>
</feature>
<feature type="strand" evidence="5">
    <location>
        <begin position="94"/>
        <end position="96"/>
    </location>
</feature>
<feature type="strand" evidence="6">
    <location>
        <begin position="98"/>
        <end position="100"/>
    </location>
</feature>
<feature type="helix" evidence="5">
    <location>
        <begin position="101"/>
        <end position="105"/>
    </location>
</feature>
<feature type="strand" evidence="5">
    <location>
        <begin position="111"/>
        <end position="117"/>
    </location>
</feature>
<feature type="strand" evidence="5">
    <location>
        <begin position="122"/>
        <end position="129"/>
    </location>
</feature>
<feature type="helix" evidence="5">
    <location>
        <begin position="134"/>
        <end position="143"/>
    </location>
</feature>
<evidence type="ECO:0000250" key="1"/>
<evidence type="ECO:0000255" key="2">
    <source>
        <dbReference type="PROSITE-ProRule" id="PRU00691"/>
    </source>
</evidence>
<evidence type="ECO:0000269" key="3">
    <source>
    </source>
</evidence>
<evidence type="ECO:0000305" key="4"/>
<evidence type="ECO:0007829" key="5">
    <source>
        <dbReference type="PDB" id="2B5X"/>
    </source>
</evidence>
<evidence type="ECO:0007829" key="6">
    <source>
        <dbReference type="PDB" id="2B5Y"/>
    </source>
</evidence>
<name>YKUV_BACSU</name>
<organism>
    <name type="scientific">Bacillus subtilis (strain 168)</name>
    <dbReference type="NCBI Taxonomy" id="224308"/>
    <lineage>
        <taxon>Bacteria</taxon>
        <taxon>Bacillati</taxon>
        <taxon>Bacillota</taxon>
        <taxon>Bacilli</taxon>
        <taxon>Bacillales</taxon>
        <taxon>Bacillaceae</taxon>
        <taxon>Bacillus</taxon>
    </lineage>
</organism>
<protein>
    <recommendedName>
        <fullName>Thiol-disulfide oxidoreductase YkuV</fullName>
        <ecNumber>1.8.-.-</ecNumber>
    </recommendedName>
</protein>
<dbReference type="EC" id="1.8.-.-"/>
<dbReference type="EMBL" id="AJ222587">
    <property type="protein sequence ID" value="CAA10885.1"/>
    <property type="molecule type" value="Genomic_DNA"/>
</dbReference>
<dbReference type="EMBL" id="AL009126">
    <property type="protein sequence ID" value="CAB13296.2"/>
    <property type="molecule type" value="Genomic_DNA"/>
</dbReference>
<dbReference type="PIR" id="C69867">
    <property type="entry name" value="C69867"/>
</dbReference>
<dbReference type="RefSeq" id="NP_389306.2">
    <property type="nucleotide sequence ID" value="NC_000964.3"/>
</dbReference>
<dbReference type="RefSeq" id="WP_003245810.1">
    <property type="nucleotide sequence ID" value="NZ_OZ025638.1"/>
</dbReference>
<dbReference type="PDB" id="2B5X">
    <property type="method" value="NMR"/>
    <property type="chains" value="A=1-148"/>
</dbReference>
<dbReference type="PDB" id="2B5Y">
    <property type="method" value="NMR"/>
    <property type="chains" value="A=1-148"/>
</dbReference>
<dbReference type="PDBsum" id="2B5X"/>
<dbReference type="PDBsum" id="2B5Y"/>
<dbReference type="BMRB" id="O31699"/>
<dbReference type="SMR" id="O31699"/>
<dbReference type="FunCoup" id="O31699">
    <property type="interactions" value="17"/>
</dbReference>
<dbReference type="STRING" id="224308.BSU14230"/>
<dbReference type="PaxDb" id="224308-BSU14230"/>
<dbReference type="EnsemblBacteria" id="CAB13296">
    <property type="protein sequence ID" value="CAB13296"/>
    <property type="gene ID" value="BSU_14230"/>
</dbReference>
<dbReference type="GeneID" id="938804"/>
<dbReference type="KEGG" id="bsu:BSU14230"/>
<dbReference type="PATRIC" id="fig|224308.179.peg.1552"/>
<dbReference type="eggNOG" id="COG0526">
    <property type="taxonomic scope" value="Bacteria"/>
</dbReference>
<dbReference type="InParanoid" id="O31699"/>
<dbReference type="OrthoDB" id="9811352at2"/>
<dbReference type="PhylomeDB" id="O31699"/>
<dbReference type="BioCyc" id="BSUB:BSU14230-MONOMER"/>
<dbReference type="EvolutionaryTrace" id="O31699"/>
<dbReference type="Proteomes" id="UP000001570">
    <property type="component" value="Chromosome"/>
</dbReference>
<dbReference type="GO" id="GO:0005737">
    <property type="term" value="C:cytoplasm"/>
    <property type="evidence" value="ECO:0007669"/>
    <property type="project" value="UniProtKB-SubCell"/>
</dbReference>
<dbReference type="GO" id="GO:0016209">
    <property type="term" value="F:antioxidant activity"/>
    <property type="evidence" value="ECO:0007669"/>
    <property type="project" value="InterPro"/>
</dbReference>
<dbReference type="GO" id="GO:0016491">
    <property type="term" value="F:oxidoreductase activity"/>
    <property type="evidence" value="ECO:0007669"/>
    <property type="project" value="UniProtKB-KW"/>
</dbReference>
<dbReference type="CDD" id="cd02966">
    <property type="entry name" value="TlpA_like_family"/>
    <property type="match status" value="1"/>
</dbReference>
<dbReference type="Gene3D" id="3.40.30.10">
    <property type="entry name" value="Glutaredoxin"/>
    <property type="match status" value="1"/>
</dbReference>
<dbReference type="InterPro" id="IPR000866">
    <property type="entry name" value="AhpC/TSA"/>
</dbReference>
<dbReference type="InterPro" id="IPR036249">
    <property type="entry name" value="Thioredoxin-like_sf"/>
</dbReference>
<dbReference type="InterPro" id="IPR013766">
    <property type="entry name" value="Thioredoxin_domain"/>
</dbReference>
<dbReference type="InterPro" id="IPR050553">
    <property type="entry name" value="Thioredoxin_ResA/DsbE_sf"/>
</dbReference>
<dbReference type="PANTHER" id="PTHR42852:SF12">
    <property type="entry name" value="THIOL-DISULFIDE OXIDOREDUCTASE YKUV"/>
    <property type="match status" value="1"/>
</dbReference>
<dbReference type="PANTHER" id="PTHR42852">
    <property type="entry name" value="THIOL:DISULFIDE INTERCHANGE PROTEIN DSBE"/>
    <property type="match status" value="1"/>
</dbReference>
<dbReference type="Pfam" id="PF00578">
    <property type="entry name" value="AhpC-TSA"/>
    <property type="match status" value="1"/>
</dbReference>
<dbReference type="SUPFAM" id="SSF52833">
    <property type="entry name" value="Thioredoxin-like"/>
    <property type="match status" value="1"/>
</dbReference>
<dbReference type="PROSITE" id="PS51352">
    <property type="entry name" value="THIOREDOXIN_2"/>
    <property type="match status" value="1"/>
</dbReference>
<sequence>MKLRQPMPELTGEKAWLNGEVTREQLIGEKPTLIHFWSISCHLCKEAMPQVNEFRDKYQDQLNVVAVHMPRSEDDLDPGKIKETAAEHDITQPIFVDSDHALTDAFENEYVPAYYVFDKTGQLRHFQAGGSGMKMLEKRVNRVLAETE</sequence>
<comment type="function">
    <text>Participates in various redox reactions through the reversible oxidation of its active center dithiol to a disulfide and catalyzes dithiol-disulfide exchange reactions.</text>
</comment>
<comment type="subunit">
    <text>Monomer.</text>
</comment>
<comment type="subcellular location">
    <subcellularLocation>
        <location evidence="1">Cytoplasm</location>
    </subcellularLocation>
</comment>
<reference key="1">
    <citation type="submission" date="1997-11" db="EMBL/GenBank/DDBJ databases">
        <title>Sequence of the Bacillus subtilis chromosome from ykuA to cse-15.</title>
        <authorList>
            <person name="Scanlan E."/>
            <person name="Devine K.M."/>
        </authorList>
    </citation>
    <scope>NUCLEOTIDE SEQUENCE [GENOMIC DNA]</scope>
    <source>
        <strain>168</strain>
    </source>
</reference>
<reference key="2">
    <citation type="journal article" date="1997" name="Nature">
        <title>The complete genome sequence of the Gram-positive bacterium Bacillus subtilis.</title>
        <authorList>
            <person name="Kunst F."/>
            <person name="Ogasawara N."/>
            <person name="Moszer I."/>
            <person name="Albertini A.M."/>
            <person name="Alloni G."/>
            <person name="Azevedo V."/>
            <person name="Bertero M.G."/>
            <person name="Bessieres P."/>
            <person name="Bolotin A."/>
            <person name="Borchert S."/>
            <person name="Borriss R."/>
            <person name="Boursier L."/>
            <person name="Brans A."/>
            <person name="Braun M."/>
            <person name="Brignell S.C."/>
            <person name="Bron S."/>
            <person name="Brouillet S."/>
            <person name="Bruschi C.V."/>
            <person name="Caldwell B."/>
            <person name="Capuano V."/>
            <person name="Carter N.M."/>
            <person name="Choi S.-K."/>
            <person name="Codani J.-J."/>
            <person name="Connerton I.F."/>
            <person name="Cummings N.J."/>
            <person name="Daniel R.A."/>
            <person name="Denizot F."/>
            <person name="Devine K.M."/>
            <person name="Duesterhoeft A."/>
            <person name="Ehrlich S.D."/>
            <person name="Emmerson P.T."/>
            <person name="Entian K.-D."/>
            <person name="Errington J."/>
            <person name="Fabret C."/>
            <person name="Ferrari E."/>
            <person name="Foulger D."/>
            <person name="Fritz C."/>
            <person name="Fujita M."/>
            <person name="Fujita Y."/>
            <person name="Fuma S."/>
            <person name="Galizzi A."/>
            <person name="Galleron N."/>
            <person name="Ghim S.-Y."/>
            <person name="Glaser P."/>
            <person name="Goffeau A."/>
            <person name="Golightly E.J."/>
            <person name="Grandi G."/>
            <person name="Guiseppi G."/>
            <person name="Guy B.J."/>
            <person name="Haga K."/>
            <person name="Haiech J."/>
            <person name="Harwood C.R."/>
            <person name="Henaut A."/>
            <person name="Hilbert H."/>
            <person name="Holsappel S."/>
            <person name="Hosono S."/>
            <person name="Hullo M.-F."/>
            <person name="Itaya M."/>
            <person name="Jones L.-M."/>
            <person name="Joris B."/>
            <person name="Karamata D."/>
            <person name="Kasahara Y."/>
            <person name="Klaerr-Blanchard M."/>
            <person name="Klein C."/>
            <person name="Kobayashi Y."/>
            <person name="Koetter P."/>
            <person name="Koningstein G."/>
            <person name="Krogh S."/>
            <person name="Kumano M."/>
            <person name="Kurita K."/>
            <person name="Lapidus A."/>
            <person name="Lardinois S."/>
            <person name="Lauber J."/>
            <person name="Lazarevic V."/>
            <person name="Lee S.-M."/>
            <person name="Levine A."/>
            <person name="Liu H."/>
            <person name="Masuda S."/>
            <person name="Mauel C."/>
            <person name="Medigue C."/>
            <person name="Medina N."/>
            <person name="Mellado R.P."/>
            <person name="Mizuno M."/>
            <person name="Moestl D."/>
            <person name="Nakai S."/>
            <person name="Noback M."/>
            <person name="Noone D."/>
            <person name="O'Reilly M."/>
            <person name="Ogawa K."/>
            <person name="Ogiwara A."/>
            <person name="Oudega B."/>
            <person name="Park S.-H."/>
            <person name="Parro V."/>
            <person name="Pohl T.M."/>
            <person name="Portetelle D."/>
            <person name="Porwollik S."/>
            <person name="Prescott A.M."/>
            <person name="Presecan E."/>
            <person name="Pujic P."/>
            <person name="Purnelle B."/>
            <person name="Rapoport G."/>
            <person name="Rey M."/>
            <person name="Reynolds S."/>
            <person name="Rieger M."/>
            <person name="Rivolta C."/>
            <person name="Rocha E."/>
            <person name="Roche B."/>
            <person name="Rose M."/>
            <person name="Sadaie Y."/>
            <person name="Sato T."/>
            <person name="Scanlan E."/>
            <person name="Schleich S."/>
            <person name="Schroeter R."/>
            <person name="Scoffone F."/>
            <person name="Sekiguchi J."/>
            <person name="Sekowska A."/>
            <person name="Seror S.J."/>
            <person name="Serror P."/>
            <person name="Shin B.-S."/>
            <person name="Soldo B."/>
            <person name="Sorokin A."/>
            <person name="Tacconi E."/>
            <person name="Takagi T."/>
            <person name="Takahashi H."/>
            <person name="Takemaru K."/>
            <person name="Takeuchi M."/>
            <person name="Tamakoshi A."/>
            <person name="Tanaka T."/>
            <person name="Terpstra P."/>
            <person name="Tognoni A."/>
            <person name="Tosato V."/>
            <person name="Uchiyama S."/>
            <person name="Vandenbol M."/>
            <person name="Vannier F."/>
            <person name="Vassarotti A."/>
            <person name="Viari A."/>
            <person name="Wambutt R."/>
            <person name="Wedler E."/>
            <person name="Wedler H."/>
            <person name="Weitzenegger T."/>
            <person name="Winters P."/>
            <person name="Wipat A."/>
            <person name="Yamamoto H."/>
            <person name="Yamane K."/>
            <person name="Yasumoto K."/>
            <person name="Yata K."/>
            <person name="Yoshida K."/>
            <person name="Yoshikawa H.-F."/>
            <person name="Zumstein E."/>
            <person name="Yoshikawa H."/>
            <person name="Danchin A."/>
        </authorList>
    </citation>
    <scope>NUCLEOTIDE SEQUENCE [LARGE SCALE GENOMIC DNA]</scope>
    <source>
        <strain>168</strain>
    </source>
</reference>
<reference key="3">
    <citation type="journal article" date="2009" name="Microbiology">
        <title>From a consortium sequence to a unified sequence: the Bacillus subtilis 168 reference genome a decade later.</title>
        <authorList>
            <person name="Barbe V."/>
            <person name="Cruveiller S."/>
            <person name="Kunst F."/>
            <person name="Lenoble P."/>
            <person name="Meurice G."/>
            <person name="Sekowska A."/>
            <person name="Vallenet D."/>
            <person name="Wang T."/>
            <person name="Moszer I."/>
            <person name="Medigue C."/>
            <person name="Danchin A."/>
        </authorList>
    </citation>
    <scope>SEQUENCE REVISION TO 59 AND C-TERMINUS</scope>
</reference>
<reference key="4">
    <citation type="journal article" date="2006" name="J. Biol. Chem.">
        <title>The Bacillus subtilis ykuV is a thiol:disulfide oxidoreductase revealed by its redox structures and activity.</title>
        <authorList>
            <person name="Zhang X."/>
            <person name="Hu Y."/>
            <person name="Guo X."/>
            <person name="Lescop E."/>
            <person name="Li Y."/>
            <person name="Xia B."/>
            <person name="Jin C."/>
        </authorList>
    </citation>
    <scope>STRUCTURE BY NMR OF REDUCED AND OXIDIZED FORMS</scope>
    <scope>DISULFIDE BOND</scope>
    <scope>CHARACTERIZATION</scope>
</reference>
<accession>O31699</accession>
<accession>O31403</accession>
<keyword id="KW-0002">3D-structure</keyword>
<keyword id="KW-0963">Cytoplasm</keyword>
<keyword id="KW-1015">Disulfide bond</keyword>
<keyword id="KW-0249">Electron transport</keyword>
<keyword id="KW-0560">Oxidoreductase</keyword>
<keyword id="KW-0676">Redox-active center</keyword>
<keyword id="KW-1185">Reference proteome</keyword>
<keyword id="KW-0813">Transport</keyword>
<gene>
    <name type="primary">ykuV</name>
    <name type="ordered locus">BSU14230</name>
</gene>
<proteinExistence type="evidence at protein level"/>